<accession>Q6SVZ0</accession>
<accession>D2K3W1</accession>
<proteinExistence type="inferred from homology"/>
<gene>
    <name type="primary">US16</name>
</gene>
<sequence length="309" mass="34689">MGLRFPTATQRQIVFRRLFDSGNNDDYDEAAVVAVLGWVHRFEVVVRIAGLLLFQISTAVAVLGSFSLVFPTATLKSRPGFPCHVVWAPEVLLLVPVASALFVYFRYERPVLAQRNRHPRCRRPFRQLVLLLAGLLAHIPALGVTCACQEPREVLTSFVLTLVITLLCAEVVFICRDNCTLSDQFALINGVWVVVFLANVLIVFTRPWTWPLRLLLGFYSTVGLIFAGHFSQQVLFVRHVLMPRDVAHTSLQLFITFISLFFLILRIRNCQDLLSDLRLLELPSSDAMTLTPNDLSHASSSTPLSTLSP</sequence>
<reference key="1">
    <citation type="journal article" date="2004" name="J. Gen. Virol.">
        <title>Genetic content of wild-type human cytomegalovirus.</title>
        <authorList>
            <person name="Dolan A."/>
            <person name="Cunningham C."/>
            <person name="Hector R.D."/>
            <person name="Hassan-Walker A.F."/>
            <person name="Lee L."/>
            <person name="Addison C."/>
            <person name="Dargan D.J."/>
            <person name="McGeoch D.J."/>
            <person name="Gatherer D."/>
            <person name="Emery V.C."/>
            <person name="Griffiths P.D."/>
            <person name="Sinzger C."/>
            <person name="McSharry B.P."/>
            <person name="Wilkinson G.W.G."/>
            <person name="Davison A.J."/>
        </authorList>
    </citation>
    <scope>NUCLEOTIDE SEQUENCE [LARGE SCALE GENOMIC DNA]</scope>
</reference>
<reference key="2">
    <citation type="journal article" date="2012" name="J. Virol.">
        <title>The US16 gene of Human cytomegalovirus is required for efficient viral infection of endothelial and epithelial cells.</title>
        <authorList>
            <person name="Bronzini M."/>
            <person name="Luganini A."/>
            <person name="Dell'oste V."/>
            <person name="De Andrea M."/>
            <person name="Landolfo S."/>
            <person name="Gribaudo G."/>
        </authorList>
    </citation>
    <scope>FUNCTION</scope>
    <scope>SUBCELLULAR LOCATION</scope>
</reference>
<organism>
    <name type="scientific">Human cytomegalovirus (strain Merlin)</name>
    <name type="common">HHV-5</name>
    <name type="synonym">Human herpesvirus 5</name>
    <dbReference type="NCBI Taxonomy" id="295027"/>
    <lineage>
        <taxon>Viruses</taxon>
        <taxon>Duplodnaviria</taxon>
        <taxon>Heunggongvirae</taxon>
        <taxon>Peploviricota</taxon>
        <taxon>Herviviricetes</taxon>
        <taxon>Herpesvirales</taxon>
        <taxon>Orthoherpesviridae</taxon>
        <taxon>Betaherpesvirinae</taxon>
        <taxon>Cytomegalovirus</taxon>
        <taxon>Cytomegalovirus humanbeta5</taxon>
        <taxon>Human cytomegalovirus</taxon>
    </lineage>
</organism>
<feature type="chain" id="PRO_0000418321" description="Protein US16">
    <location>
        <begin position="1"/>
        <end position="309"/>
    </location>
</feature>
<feature type="transmembrane region" description="Helical" evidence="1">
    <location>
        <begin position="50"/>
        <end position="70"/>
    </location>
</feature>
<feature type="transmembrane region" description="Helical" evidence="1">
    <location>
        <begin position="85"/>
        <end position="105"/>
    </location>
</feature>
<feature type="transmembrane region" description="Helical" evidence="1">
    <location>
        <begin position="128"/>
        <end position="148"/>
    </location>
</feature>
<feature type="transmembrane region" description="Helical" evidence="1">
    <location>
        <begin position="154"/>
        <end position="174"/>
    </location>
</feature>
<feature type="transmembrane region" description="Helical" evidence="1">
    <location>
        <begin position="185"/>
        <end position="205"/>
    </location>
</feature>
<feature type="transmembrane region" description="Helical" evidence="1">
    <location>
        <begin position="210"/>
        <end position="230"/>
    </location>
</feature>
<feature type="transmembrane region" description="Helical" evidence="1">
    <location>
        <begin position="245"/>
        <end position="265"/>
    </location>
</feature>
<keyword id="KW-1035">Host cytoplasm</keyword>
<keyword id="KW-1043">Host membrane</keyword>
<keyword id="KW-0472">Membrane</keyword>
<keyword id="KW-1185">Reference proteome</keyword>
<keyword id="KW-0812">Transmembrane</keyword>
<keyword id="KW-1133">Transmembrane helix</keyword>
<dbReference type="EMBL" id="AY446894">
    <property type="protein sequence ID" value="AAR31705.1"/>
    <property type="molecule type" value="Genomic_DNA"/>
</dbReference>
<dbReference type="RefSeq" id="YP_081601.1">
    <property type="nucleotide sequence ID" value="NC_006273.2"/>
</dbReference>
<dbReference type="DNASU" id="3077558"/>
<dbReference type="GeneID" id="3077558"/>
<dbReference type="KEGG" id="vg:3077558"/>
<dbReference type="Reactome" id="R-HSA-9609690">
    <property type="pathway name" value="HCMV Early Events"/>
</dbReference>
<dbReference type="Proteomes" id="UP000000938">
    <property type="component" value="Segment"/>
</dbReference>
<dbReference type="GO" id="GO:0030430">
    <property type="term" value="C:host cell cytoplasm"/>
    <property type="evidence" value="ECO:0007669"/>
    <property type="project" value="UniProtKB-SubCell"/>
</dbReference>
<dbReference type="GO" id="GO:0033644">
    <property type="term" value="C:host cell membrane"/>
    <property type="evidence" value="ECO:0007669"/>
    <property type="project" value="UniProtKB-SubCell"/>
</dbReference>
<dbReference type="GO" id="GO:0016020">
    <property type="term" value="C:membrane"/>
    <property type="evidence" value="ECO:0007669"/>
    <property type="project" value="UniProtKB-KW"/>
</dbReference>
<comment type="subcellular location">
    <subcellularLocation>
        <location evidence="3">Host membrane</location>
        <topology evidence="3">Multi-pass membrane protein</topology>
    </subcellularLocation>
    <subcellularLocation>
        <location evidence="2">Host cytoplasm</location>
    </subcellularLocation>
    <text>Localizes in cytoplasmic assembly compartments but not present in virions.</text>
</comment>
<comment type="similarity">
    <text evidence="3">Belongs to the cytomegalovirus US12 family.</text>
</comment>
<evidence type="ECO:0000255" key="1"/>
<evidence type="ECO:0000269" key="2">
    <source>
    </source>
</evidence>
<evidence type="ECO:0000305" key="3"/>
<organismHost>
    <name type="scientific">Homo sapiens</name>
    <name type="common">Human</name>
    <dbReference type="NCBI Taxonomy" id="9606"/>
</organismHost>
<name>US16_HCMVM</name>
<protein>
    <recommendedName>
        <fullName>Protein US16</fullName>
    </recommendedName>
</protein>